<sequence>MTNKIIQQIEAEQMNKEIPAFAPGDTVIVQVKVKEGDRQRLQAFEGVVIAKRNRGLNSAFTVRKISNGVGVERTFQTYSPIVDSLSVKRRGDVRKAKLYYLRALSGKAARIKEKLV</sequence>
<gene>
    <name evidence="1" type="primary">rplS</name>
    <name type="ordered locus">PA14_16000</name>
</gene>
<comment type="function">
    <text evidence="1">This protein is located at the 30S-50S ribosomal subunit interface and may play a role in the structure and function of the aminoacyl-tRNA binding site.</text>
</comment>
<comment type="similarity">
    <text evidence="1">Belongs to the bacterial ribosomal protein bL19 family.</text>
</comment>
<reference key="1">
    <citation type="journal article" date="2006" name="Genome Biol.">
        <title>Genomic analysis reveals that Pseudomonas aeruginosa virulence is combinatorial.</title>
        <authorList>
            <person name="Lee D.G."/>
            <person name="Urbach J.M."/>
            <person name="Wu G."/>
            <person name="Liberati N.T."/>
            <person name="Feinbaum R.L."/>
            <person name="Miyata S."/>
            <person name="Diggins L.T."/>
            <person name="He J."/>
            <person name="Saucier M."/>
            <person name="Deziel E."/>
            <person name="Friedman L."/>
            <person name="Li L."/>
            <person name="Grills G."/>
            <person name="Montgomery K."/>
            <person name="Kucherlapati R."/>
            <person name="Rahme L.G."/>
            <person name="Ausubel F.M."/>
        </authorList>
    </citation>
    <scope>NUCLEOTIDE SEQUENCE [LARGE SCALE GENOMIC DNA]</scope>
    <source>
        <strain>UCBPP-PA14</strain>
    </source>
</reference>
<organism>
    <name type="scientific">Pseudomonas aeruginosa (strain UCBPP-PA14)</name>
    <dbReference type="NCBI Taxonomy" id="208963"/>
    <lineage>
        <taxon>Bacteria</taxon>
        <taxon>Pseudomonadati</taxon>
        <taxon>Pseudomonadota</taxon>
        <taxon>Gammaproteobacteria</taxon>
        <taxon>Pseudomonadales</taxon>
        <taxon>Pseudomonadaceae</taxon>
        <taxon>Pseudomonas</taxon>
    </lineage>
</organism>
<dbReference type="EMBL" id="CP000438">
    <property type="protein sequence ID" value="ABJ12976.1"/>
    <property type="molecule type" value="Genomic_DNA"/>
</dbReference>
<dbReference type="RefSeq" id="WP_003092637.1">
    <property type="nucleotide sequence ID" value="NZ_CP034244.1"/>
</dbReference>
<dbReference type="SMR" id="Q02RL5"/>
<dbReference type="GeneID" id="77219764"/>
<dbReference type="KEGG" id="pau:PA14_16000"/>
<dbReference type="PseudoCAP" id="PA14_16000"/>
<dbReference type="HOGENOM" id="CLU_103507_2_1_6"/>
<dbReference type="BioCyc" id="PAER208963:G1G74-1317-MONOMER"/>
<dbReference type="Proteomes" id="UP000000653">
    <property type="component" value="Chromosome"/>
</dbReference>
<dbReference type="GO" id="GO:0022625">
    <property type="term" value="C:cytosolic large ribosomal subunit"/>
    <property type="evidence" value="ECO:0007669"/>
    <property type="project" value="TreeGrafter"/>
</dbReference>
<dbReference type="GO" id="GO:0003735">
    <property type="term" value="F:structural constituent of ribosome"/>
    <property type="evidence" value="ECO:0007669"/>
    <property type="project" value="InterPro"/>
</dbReference>
<dbReference type="GO" id="GO:0006412">
    <property type="term" value="P:translation"/>
    <property type="evidence" value="ECO:0007669"/>
    <property type="project" value="UniProtKB-UniRule"/>
</dbReference>
<dbReference type="FunFam" id="2.30.30.790:FF:000001">
    <property type="entry name" value="50S ribosomal protein L19"/>
    <property type="match status" value="1"/>
</dbReference>
<dbReference type="Gene3D" id="2.30.30.790">
    <property type="match status" value="1"/>
</dbReference>
<dbReference type="HAMAP" id="MF_00402">
    <property type="entry name" value="Ribosomal_bL19"/>
    <property type="match status" value="1"/>
</dbReference>
<dbReference type="InterPro" id="IPR001857">
    <property type="entry name" value="Ribosomal_bL19"/>
</dbReference>
<dbReference type="InterPro" id="IPR018257">
    <property type="entry name" value="Ribosomal_bL19_CS"/>
</dbReference>
<dbReference type="InterPro" id="IPR038657">
    <property type="entry name" value="Ribosomal_bL19_sf"/>
</dbReference>
<dbReference type="InterPro" id="IPR008991">
    <property type="entry name" value="Translation_prot_SH3-like_sf"/>
</dbReference>
<dbReference type="NCBIfam" id="TIGR01024">
    <property type="entry name" value="rplS_bact"/>
    <property type="match status" value="1"/>
</dbReference>
<dbReference type="PANTHER" id="PTHR15680:SF9">
    <property type="entry name" value="LARGE RIBOSOMAL SUBUNIT PROTEIN BL19M"/>
    <property type="match status" value="1"/>
</dbReference>
<dbReference type="PANTHER" id="PTHR15680">
    <property type="entry name" value="RIBOSOMAL PROTEIN L19"/>
    <property type="match status" value="1"/>
</dbReference>
<dbReference type="Pfam" id="PF01245">
    <property type="entry name" value="Ribosomal_L19"/>
    <property type="match status" value="1"/>
</dbReference>
<dbReference type="PIRSF" id="PIRSF002191">
    <property type="entry name" value="Ribosomal_L19"/>
    <property type="match status" value="1"/>
</dbReference>
<dbReference type="PRINTS" id="PR00061">
    <property type="entry name" value="RIBOSOMALL19"/>
</dbReference>
<dbReference type="SUPFAM" id="SSF50104">
    <property type="entry name" value="Translation proteins SH3-like domain"/>
    <property type="match status" value="1"/>
</dbReference>
<dbReference type="PROSITE" id="PS01015">
    <property type="entry name" value="RIBOSOMAL_L19"/>
    <property type="match status" value="1"/>
</dbReference>
<keyword id="KW-0687">Ribonucleoprotein</keyword>
<keyword id="KW-0689">Ribosomal protein</keyword>
<proteinExistence type="inferred from homology"/>
<name>RL19_PSEAB</name>
<accession>Q02RL5</accession>
<feature type="chain" id="PRO_1000049720" description="Large ribosomal subunit protein bL19">
    <location>
        <begin position="1"/>
        <end position="116"/>
    </location>
</feature>
<evidence type="ECO:0000255" key="1">
    <source>
        <dbReference type="HAMAP-Rule" id="MF_00402"/>
    </source>
</evidence>
<evidence type="ECO:0000305" key="2"/>
<protein>
    <recommendedName>
        <fullName evidence="1">Large ribosomal subunit protein bL19</fullName>
    </recommendedName>
    <alternativeName>
        <fullName evidence="2">50S ribosomal protein L19</fullName>
    </alternativeName>
</protein>